<accession>P07412</accession>
<protein>
    <recommendedName>
        <fullName>Hemoglobin subunit beta-A/B</fullName>
    </recommendedName>
    <alternativeName>
        <fullName>Beta-A/B-globin</fullName>
    </alternativeName>
    <alternativeName>
        <fullName>Hemoglobin beta-A/B chain</fullName>
    </alternativeName>
</protein>
<dbReference type="PIR" id="B25203">
    <property type="entry name" value="B25203"/>
</dbReference>
<dbReference type="PDB" id="3D4X">
    <property type="method" value="X-ray"/>
    <property type="resolution" value="2.20 A"/>
    <property type="chains" value="B/D=2-146"/>
</dbReference>
<dbReference type="PDB" id="3GQP">
    <property type="method" value="X-ray"/>
    <property type="resolution" value="2.00 A"/>
    <property type="chains" value="B/D=2-146"/>
</dbReference>
<dbReference type="PDB" id="3GQR">
    <property type="method" value="X-ray"/>
    <property type="resolution" value="2.40 A"/>
    <property type="chains" value="B/D/F/H=2-146"/>
</dbReference>
<dbReference type="PDB" id="3GYS">
    <property type="method" value="X-ray"/>
    <property type="resolution" value="2.90 A"/>
    <property type="chains" value="B/D/F/H=2-146"/>
</dbReference>
<dbReference type="PDBsum" id="3D4X"/>
<dbReference type="PDBsum" id="3GQP"/>
<dbReference type="PDBsum" id="3GQR"/>
<dbReference type="PDBsum" id="3GYS"/>
<dbReference type="SMR" id="P07412"/>
<dbReference type="FunCoup" id="P07412">
    <property type="interactions" value="2"/>
</dbReference>
<dbReference type="STRING" id="9685.ENSFCAP00000059222"/>
<dbReference type="iPTMnet" id="P07412"/>
<dbReference type="PaxDb" id="9685-ENSFCAP00000015261"/>
<dbReference type="eggNOG" id="KOG3378">
    <property type="taxonomic scope" value="Eukaryota"/>
</dbReference>
<dbReference type="InParanoid" id="P07412"/>
<dbReference type="EvolutionaryTrace" id="P07412"/>
<dbReference type="Proteomes" id="UP000011712">
    <property type="component" value="Unplaced"/>
</dbReference>
<dbReference type="GO" id="GO:0031838">
    <property type="term" value="C:haptoglobin-hemoglobin complex"/>
    <property type="evidence" value="ECO:0000318"/>
    <property type="project" value="GO_Central"/>
</dbReference>
<dbReference type="GO" id="GO:0005833">
    <property type="term" value="C:hemoglobin complex"/>
    <property type="evidence" value="ECO:0000318"/>
    <property type="project" value="GO_Central"/>
</dbReference>
<dbReference type="GO" id="GO:0020037">
    <property type="term" value="F:heme binding"/>
    <property type="evidence" value="ECO:0000318"/>
    <property type="project" value="GO_Central"/>
</dbReference>
<dbReference type="GO" id="GO:0031721">
    <property type="term" value="F:hemoglobin alpha binding"/>
    <property type="evidence" value="ECO:0000318"/>
    <property type="project" value="GO_Central"/>
</dbReference>
<dbReference type="GO" id="GO:0046872">
    <property type="term" value="F:metal ion binding"/>
    <property type="evidence" value="ECO:0007669"/>
    <property type="project" value="UniProtKB-KW"/>
</dbReference>
<dbReference type="GO" id="GO:0019825">
    <property type="term" value="F:oxygen binding"/>
    <property type="evidence" value="ECO:0000318"/>
    <property type="project" value="GO_Central"/>
</dbReference>
<dbReference type="GO" id="GO:0005344">
    <property type="term" value="F:oxygen carrier activity"/>
    <property type="evidence" value="ECO:0000318"/>
    <property type="project" value="GO_Central"/>
</dbReference>
<dbReference type="GO" id="GO:0098869">
    <property type="term" value="P:cellular oxidant detoxification"/>
    <property type="evidence" value="ECO:0007669"/>
    <property type="project" value="GOC"/>
</dbReference>
<dbReference type="GO" id="GO:0042744">
    <property type="term" value="P:hydrogen peroxide catabolic process"/>
    <property type="evidence" value="ECO:0000318"/>
    <property type="project" value="GO_Central"/>
</dbReference>
<dbReference type="CDD" id="cd08925">
    <property type="entry name" value="Hb-beta-like"/>
    <property type="match status" value="1"/>
</dbReference>
<dbReference type="FunFam" id="1.10.490.10:FF:000001">
    <property type="entry name" value="Hemoglobin subunit beta"/>
    <property type="match status" value="1"/>
</dbReference>
<dbReference type="Gene3D" id="1.10.490.10">
    <property type="entry name" value="Globins"/>
    <property type="match status" value="1"/>
</dbReference>
<dbReference type="InterPro" id="IPR000971">
    <property type="entry name" value="Globin"/>
</dbReference>
<dbReference type="InterPro" id="IPR009050">
    <property type="entry name" value="Globin-like_sf"/>
</dbReference>
<dbReference type="InterPro" id="IPR012292">
    <property type="entry name" value="Globin/Proto"/>
</dbReference>
<dbReference type="InterPro" id="IPR002337">
    <property type="entry name" value="Hemoglobin_b"/>
</dbReference>
<dbReference type="InterPro" id="IPR050056">
    <property type="entry name" value="Hemoglobin_oxygen_transport"/>
</dbReference>
<dbReference type="PANTHER" id="PTHR11442">
    <property type="entry name" value="HEMOGLOBIN FAMILY MEMBER"/>
    <property type="match status" value="1"/>
</dbReference>
<dbReference type="PANTHER" id="PTHR11442:SF42">
    <property type="entry name" value="HEMOGLOBIN SUBUNIT BETA"/>
    <property type="match status" value="1"/>
</dbReference>
<dbReference type="Pfam" id="PF00042">
    <property type="entry name" value="Globin"/>
    <property type="match status" value="1"/>
</dbReference>
<dbReference type="PRINTS" id="PR00814">
    <property type="entry name" value="BETAHAEM"/>
</dbReference>
<dbReference type="SUPFAM" id="SSF46458">
    <property type="entry name" value="Globin-like"/>
    <property type="match status" value="1"/>
</dbReference>
<dbReference type="PROSITE" id="PS01033">
    <property type="entry name" value="GLOBIN"/>
    <property type="match status" value="1"/>
</dbReference>
<name>HBB_FELCA</name>
<keyword id="KW-0002">3D-structure</keyword>
<keyword id="KW-0007">Acetylation</keyword>
<keyword id="KW-0903">Direct protein sequencing</keyword>
<keyword id="KW-0349">Heme</keyword>
<keyword id="KW-0408">Iron</keyword>
<keyword id="KW-0479">Metal-binding</keyword>
<keyword id="KW-0561">Oxygen transport</keyword>
<keyword id="KW-0597">Phosphoprotein</keyword>
<keyword id="KW-1185">Reference proteome</keyword>
<keyword id="KW-0702">S-nitrosylation</keyword>
<keyword id="KW-0813">Transport</keyword>
<reference key="1">
    <citation type="journal article" date="1985" name="Biol. Chem. Hoppe-Seyler">
        <title>The primary structure of hemoglobins from the domestic cat (Felis catus, Felidae).</title>
        <authorList>
            <person name="Abbasi A."/>
            <person name="Braunitzer G."/>
        </authorList>
    </citation>
    <scope>PROTEIN SEQUENCE</scope>
    <scope>ACETYLATION AT SER-1 (VARIANT BETA-B)</scope>
</reference>
<organism>
    <name type="scientific">Felis catus</name>
    <name type="common">Cat</name>
    <name type="synonym">Felis silvestris catus</name>
    <dbReference type="NCBI Taxonomy" id="9685"/>
    <lineage>
        <taxon>Eukaryota</taxon>
        <taxon>Metazoa</taxon>
        <taxon>Chordata</taxon>
        <taxon>Craniata</taxon>
        <taxon>Vertebrata</taxon>
        <taxon>Euteleostomi</taxon>
        <taxon>Mammalia</taxon>
        <taxon>Eutheria</taxon>
        <taxon>Laurasiatheria</taxon>
        <taxon>Carnivora</taxon>
        <taxon>Feliformia</taxon>
        <taxon>Felidae</taxon>
        <taxon>Felinae</taxon>
        <taxon>Felis</taxon>
    </lineage>
</organism>
<proteinExistence type="evidence at protein level"/>
<sequence>GFLTAEEKGLVNGLWGKVNVDEVGGEALGRLLVVYPWTQRFFESFGDLSSADAIMSNAKVKAHGKKVLNSFSDGLKNIDDLKGAFAKLSELHCDKLHVDPENFRLLGNVLVCVLAHHFGHDFNPQVQAAFQKVVAGVANALAHKYH</sequence>
<gene>
    <name type="primary">HBB</name>
</gene>
<evidence type="ECO:0000250" key="1">
    <source>
        <dbReference type="UniProtKB" id="P68871"/>
    </source>
</evidence>
<evidence type="ECO:0000255" key="2">
    <source>
        <dbReference type="PROSITE-ProRule" id="PRU00238"/>
    </source>
</evidence>
<evidence type="ECO:0000269" key="3">
    <source>
    </source>
</evidence>
<evidence type="ECO:0007829" key="4">
    <source>
        <dbReference type="PDB" id="3GQP"/>
    </source>
</evidence>
<comment type="function">
    <text>Involved in oxygen transport from the lung to the various peripheral tissues.</text>
</comment>
<comment type="subunit">
    <text>Heterotetramer of two alpha chains and two beta chains.</text>
</comment>
<comment type="tissue specificity">
    <text>Red blood cells.</text>
</comment>
<comment type="polymorphism">
    <text evidence="3">There are two alleles. The sequence shown is that of beta-A.</text>
</comment>
<comment type="similarity">
    <text evidence="2">Belongs to the globin family.</text>
</comment>
<feature type="chain" id="PRO_0000052958" description="Hemoglobin subunit beta-A/B">
    <location>
        <begin position="1"/>
        <end position="146"/>
    </location>
</feature>
<feature type="domain" description="Globin" evidence="2">
    <location>
        <begin position="2"/>
        <end position="146"/>
    </location>
</feature>
<feature type="binding site" description="distal binding residue">
    <location>
        <position position="63"/>
    </location>
    <ligand>
        <name>heme b</name>
        <dbReference type="ChEBI" id="CHEBI:60344"/>
    </ligand>
    <ligandPart>
        <name>Fe</name>
        <dbReference type="ChEBI" id="CHEBI:18248"/>
    </ligandPart>
</feature>
<feature type="binding site" description="proximal binding residue">
    <location>
        <position position="92"/>
    </location>
    <ligand>
        <name>heme b</name>
        <dbReference type="ChEBI" id="CHEBI:60344"/>
    </ligand>
    <ligandPart>
        <name>Fe</name>
        <dbReference type="ChEBI" id="CHEBI:18248"/>
    </ligandPart>
</feature>
<feature type="modified residue" description="N-acetylserine; in variant beta-B" evidence="3">
    <location>
        <position position="1"/>
    </location>
</feature>
<feature type="modified residue" description="Phosphoserine" evidence="1">
    <location>
        <position position="44"/>
    </location>
</feature>
<feature type="modified residue" description="N6-acetyllysine" evidence="1">
    <location>
        <position position="59"/>
    </location>
</feature>
<feature type="modified residue" description="N6-acetyllysine" evidence="1">
    <location>
        <position position="82"/>
    </location>
</feature>
<feature type="modified residue" description="S-nitrosocysteine" evidence="1">
    <location>
        <position position="93"/>
    </location>
</feature>
<feature type="modified residue" description="N6-acetyllysine" evidence="1">
    <location>
        <position position="144"/>
    </location>
</feature>
<feature type="sequence variant" description="In beta-B." evidence="3">
    <original>G</original>
    <variation>S</variation>
    <location>
        <position position="1"/>
    </location>
</feature>
<feature type="sequence variant" description="In beta-B." evidence="3">
    <original>T</original>
    <variation>S</variation>
    <location>
        <position position="4"/>
    </location>
</feature>
<feature type="sequence variant" description="In beta-B." evidence="3">
    <original>N</original>
    <variation>S</variation>
    <location>
        <position position="139"/>
    </location>
</feature>
<feature type="sequence variant" description="In beta-B." evidence="3">
    <original>K</original>
    <variation>R</variation>
    <location>
        <position position="144"/>
    </location>
</feature>
<feature type="helix" evidence="4">
    <location>
        <begin position="5"/>
        <end position="15"/>
    </location>
</feature>
<feature type="helix" evidence="4">
    <location>
        <begin position="20"/>
        <end position="34"/>
    </location>
</feature>
<feature type="helix" evidence="4">
    <location>
        <begin position="36"/>
        <end position="45"/>
    </location>
</feature>
<feature type="helix" evidence="4">
    <location>
        <begin position="51"/>
        <end position="55"/>
    </location>
</feature>
<feature type="helix" evidence="4">
    <location>
        <begin position="58"/>
        <end position="76"/>
    </location>
</feature>
<feature type="turn" evidence="4">
    <location>
        <begin position="77"/>
        <end position="79"/>
    </location>
</feature>
<feature type="helix" evidence="4">
    <location>
        <begin position="81"/>
        <end position="84"/>
    </location>
</feature>
<feature type="helix" evidence="4">
    <location>
        <begin position="86"/>
        <end position="94"/>
    </location>
</feature>
<feature type="helix" evidence="4">
    <location>
        <begin position="101"/>
        <end position="118"/>
    </location>
</feature>
<feature type="helix" evidence="4">
    <location>
        <begin position="119"/>
        <end position="121"/>
    </location>
</feature>
<feature type="helix" evidence="4">
    <location>
        <begin position="124"/>
        <end position="142"/>
    </location>
</feature>